<accession>B9MM51</accession>
<name>RL28_CALBD</name>
<dbReference type="EMBL" id="CP001393">
    <property type="protein sequence ID" value="ACM61274.1"/>
    <property type="molecule type" value="Genomic_DNA"/>
</dbReference>
<dbReference type="RefSeq" id="WP_013291240.1">
    <property type="nucleotide sequence ID" value="NC_012034.1"/>
</dbReference>
<dbReference type="SMR" id="B9MM51"/>
<dbReference type="STRING" id="521460.Athe_2199"/>
<dbReference type="GeneID" id="31773551"/>
<dbReference type="KEGG" id="ate:Athe_2199"/>
<dbReference type="eggNOG" id="COG0227">
    <property type="taxonomic scope" value="Bacteria"/>
</dbReference>
<dbReference type="HOGENOM" id="CLU_064548_7_0_9"/>
<dbReference type="Proteomes" id="UP000007723">
    <property type="component" value="Chromosome"/>
</dbReference>
<dbReference type="GO" id="GO:1990904">
    <property type="term" value="C:ribonucleoprotein complex"/>
    <property type="evidence" value="ECO:0007669"/>
    <property type="project" value="UniProtKB-KW"/>
</dbReference>
<dbReference type="GO" id="GO:0005840">
    <property type="term" value="C:ribosome"/>
    <property type="evidence" value="ECO:0007669"/>
    <property type="project" value="UniProtKB-KW"/>
</dbReference>
<dbReference type="GO" id="GO:0003735">
    <property type="term" value="F:structural constituent of ribosome"/>
    <property type="evidence" value="ECO:0007669"/>
    <property type="project" value="InterPro"/>
</dbReference>
<dbReference type="GO" id="GO:0006412">
    <property type="term" value="P:translation"/>
    <property type="evidence" value="ECO:0007669"/>
    <property type="project" value="UniProtKB-UniRule"/>
</dbReference>
<dbReference type="Gene3D" id="2.30.170.40">
    <property type="entry name" value="Ribosomal protein L28/L24"/>
    <property type="match status" value="1"/>
</dbReference>
<dbReference type="HAMAP" id="MF_00373">
    <property type="entry name" value="Ribosomal_bL28"/>
    <property type="match status" value="1"/>
</dbReference>
<dbReference type="InterPro" id="IPR050096">
    <property type="entry name" value="Bacterial_rp_bL28"/>
</dbReference>
<dbReference type="InterPro" id="IPR026569">
    <property type="entry name" value="Ribosomal_bL28"/>
</dbReference>
<dbReference type="InterPro" id="IPR034704">
    <property type="entry name" value="Ribosomal_bL28/bL31-like_sf"/>
</dbReference>
<dbReference type="InterPro" id="IPR001383">
    <property type="entry name" value="Ribosomal_bL28_bact-type"/>
</dbReference>
<dbReference type="InterPro" id="IPR037147">
    <property type="entry name" value="Ribosomal_bL28_sf"/>
</dbReference>
<dbReference type="NCBIfam" id="TIGR00009">
    <property type="entry name" value="L28"/>
    <property type="match status" value="1"/>
</dbReference>
<dbReference type="PANTHER" id="PTHR39080">
    <property type="entry name" value="50S RIBOSOMAL PROTEIN L28"/>
    <property type="match status" value="1"/>
</dbReference>
<dbReference type="PANTHER" id="PTHR39080:SF1">
    <property type="entry name" value="LARGE RIBOSOMAL SUBUNIT PROTEIN BL28A"/>
    <property type="match status" value="1"/>
</dbReference>
<dbReference type="Pfam" id="PF00830">
    <property type="entry name" value="Ribosomal_L28"/>
    <property type="match status" value="1"/>
</dbReference>
<dbReference type="SUPFAM" id="SSF143800">
    <property type="entry name" value="L28p-like"/>
    <property type="match status" value="1"/>
</dbReference>
<protein>
    <recommendedName>
        <fullName evidence="1">Large ribosomal subunit protein bL28</fullName>
    </recommendedName>
    <alternativeName>
        <fullName evidence="2">50S ribosomal protein L28</fullName>
    </alternativeName>
</protein>
<evidence type="ECO:0000255" key="1">
    <source>
        <dbReference type="HAMAP-Rule" id="MF_00373"/>
    </source>
</evidence>
<evidence type="ECO:0000305" key="2"/>
<keyword id="KW-0687">Ribonucleoprotein</keyword>
<keyword id="KW-0689">Ribosomal protein</keyword>
<feature type="chain" id="PRO_1000195897" description="Large ribosomal subunit protein bL28">
    <location>
        <begin position="1"/>
        <end position="62"/>
    </location>
</feature>
<gene>
    <name evidence="1" type="primary">rpmB</name>
    <name type="ordered locus">Athe_2199</name>
</gene>
<comment type="similarity">
    <text evidence="1">Belongs to the bacterial ribosomal protein bL28 family.</text>
</comment>
<proteinExistence type="inferred from homology"/>
<organism>
    <name type="scientific">Caldicellulosiruptor bescii (strain ATCC BAA-1888 / DSM 6725 / KCTC 15123 / Z-1320)</name>
    <name type="common">Anaerocellum thermophilum</name>
    <dbReference type="NCBI Taxonomy" id="521460"/>
    <lineage>
        <taxon>Bacteria</taxon>
        <taxon>Bacillati</taxon>
        <taxon>Bacillota</taxon>
        <taxon>Bacillota incertae sedis</taxon>
        <taxon>Caldicellulosiruptorales</taxon>
        <taxon>Caldicellulosiruptoraceae</taxon>
        <taxon>Caldicellulosiruptor</taxon>
    </lineage>
</organism>
<sequence>MAMCEVCGKKVAFGNKVSHSNKKSRRTWKPNVKKIKVLLQNGQRKRIYVCTSCIKAGKVVRA</sequence>
<reference key="1">
    <citation type="submission" date="2009-01" db="EMBL/GenBank/DDBJ databases">
        <title>Complete sequence of chromosome of Caldicellulosiruptor becscii DSM 6725.</title>
        <authorList>
            <person name="Lucas S."/>
            <person name="Copeland A."/>
            <person name="Lapidus A."/>
            <person name="Glavina del Rio T."/>
            <person name="Tice H."/>
            <person name="Bruce D."/>
            <person name="Goodwin L."/>
            <person name="Pitluck S."/>
            <person name="Sims D."/>
            <person name="Meincke L."/>
            <person name="Brettin T."/>
            <person name="Detter J.C."/>
            <person name="Han C."/>
            <person name="Larimer F."/>
            <person name="Land M."/>
            <person name="Hauser L."/>
            <person name="Kyrpides N."/>
            <person name="Ovchinnikova G."/>
            <person name="Kataeva I."/>
            <person name="Adams M.W.W."/>
        </authorList>
    </citation>
    <scope>NUCLEOTIDE SEQUENCE [LARGE SCALE GENOMIC DNA]</scope>
    <source>
        <strain>ATCC BAA-1888 / DSM 6725 / KCTC 15123 / Z-1320</strain>
    </source>
</reference>